<keyword id="KW-0342">GTP-binding</keyword>
<keyword id="KW-0378">Hydrolase</keyword>
<keyword id="KW-0479">Metal-binding</keyword>
<keyword id="KW-0547">Nucleotide-binding</keyword>
<keyword id="KW-0554">One-carbon metabolism</keyword>
<keyword id="KW-0862">Zinc</keyword>
<sequence>MDTQKIEAAVKMIIEAVGEDANREGLQETPARVARMYQEIFSGLGQTAEEHLSKSFEIIDDNMVVEKDIFFHTMCEHHFLPFYGRAHIAYIPDGRVAGLSKLARTVEVYSKKPQIQERLNIEVADALMDYLGAKGAFVVIEAEHMCMSMRGVRKPGTATLTTVARGLFETDKDLRDQAYRLMGL</sequence>
<organism>
    <name type="scientific">Streptococcus pneumoniae serotype 19F (strain G54)</name>
    <dbReference type="NCBI Taxonomy" id="512566"/>
    <lineage>
        <taxon>Bacteria</taxon>
        <taxon>Bacillati</taxon>
        <taxon>Bacillota</taxon>
        <taxon>Bacilli</taxon>
        <taxon>Lactobacillales</taxon>
        <taxon>Streptococcaceae</taxon>
        <taxon>Streptococcus</taxon>
    </lineage>
</organism>
<name>GCH1_STRP4</name>
<reference key="1">
    <citation type="journal article" date="2001" name="Microb. Drug Resist.">
        <title>Annotated draft genomic sequence from a Streptococcus pneumoniae type 19F clinical isolate.</title>
        <authorList>
            <person name="Dopazo J."/>
            <person name="Mendoza A."/>
            <person name="Herrero J."/>
            <person name="Caldara F."/>
            <person name="Humbert Y."/>
            <person name="Friedli L."/>
            <person name="Guerrier M."/>
            <person name="Grand-Schenk E."/>
            <person name="Gandin C."/>
            <person name="de Francesco M."/>
            <person name="Polissi A."/>
            <person name="Buell G."/>
            <person name="Feger G."/>
            <person name="Garcia E."/>
            <person name="Peitsch M."/>
            <person name="Garcia-Bustos J.F."/>
        </authorList>
    </citation>
    <scope>NUCLEOTIDE SEQUENCE [LARGE SCALE GENOMIC DNA]</scope>
    <source>
        <strain>G54</strain>
    </source>
</reference>
<reference key="2">
    <citation type="submission" date="2008-03" db="EMBL/GenBank/DDBJ databases">
        <title>Pneumococcal beta glucoside metabolism investigated by whole genome comparison.</title>
        <authorList>
            <person name="Mulas L."/>
            <person name="Trappetti C."/>
            <person name="Hakenbeck R."/>
            <person name="Iannelli F."/>
            <person name="Pozzi G."/>
            <person name="Davidsen T.M."/>
            <person name="Tettelin H."/>
            <person name="Oggioni M."/>
        </authorList>
    </citation>
    <scope>NUCLEOTIDE SEQUENCE [LARGE SCALE GENOMIC DNA]</scope>
    <source>
        <strain>G54</strain>
    </source>
</reference>
<gene>
    <name evidence="1" type="primary">folE</name>
    <name type="ordered locus">SPG_0276</name>
</gene>
<accession>B5E6W5</accession>
<proteinExistence type="inferred from homology"/>
<feature type="chain" id="PRO_1000100200" description="GTP cyclohydrolase 1">
    <location>
        <begin position="1"/>
        <end position="184"/>
    </location>
</feature>
<feature type="binding site" evidence="1">
    <location>
        <position position="75"/>
    </location>
    <ligand>
        <name>Zn(2+)</name>
        <dbReference type="ChEBI" id="CHEBI:29105"/>
    </ligand>
</feature>
<feature type="binding site" evidence="1">
    <location>
        <position position="78"/>
    </location>
    <ligand>
        <name>Zn(2+)</name>
        <dbReference type="ChEBI" id="CHEBI:29105"/>
    </ligand>
</feature>
<feature type="binding site" evidence="1">
    <location>
        <position position="146"/>
    </location>
    <ligand>
        <name>Zn(2+)</name>
        <dbReference type="ChEBI" id="CHEBI:29105"/>
    </ligand>
</feature>
<evidence type="ECO:0000255" key="1">
    <source>
        <dbReference type="HAMAP-Rule" id="MF_00223"/>
    </source>
</evidence>
<dbReference type="EC" id="3.5.4.16" evidence="1"/>
<dbReference type="EMBL" id="CP001015">
    <property type="protein sequence ID" value="ACF55748.1"/>
    <property type="molecule type" value="Genomic_DNA"/>
</dbReference>
<dbReference type="SMR" id="B5E6W5"/>
<dbReference type="KEGG" id="spx:SPG_0276"/>
<dbReference type="HOGENOM" id="CLU_049768_3_3_9"/>
<dbReference type="UniPathway" id="UPA00848">
    <property type="reaction ID" value="UER00151"/>
</dbReference>
<dbReference type="GO" id="GO:0005737">
    <property type="term" value="C:cytoplasm"/>
    <property type="evidence" value="ECO:0007669"/>
    <property type="project" value="TreeGrafter"/>
</dbReference>
<dbReference type="GO" id="GO:0005525">
    <property type="term" value="F:GTP binding"/>
    <property type="evidence" value="ECO:0007669"/>
    <property type="project" value="UniProtKB-KW"/>
</dbReference>
<dbReference type="GO" id="GO:0003934">
    <property type="term" value="F:GTP cyclohydrolase I activity"/>
    <property type="evidence" value="ECO:0007669"/>
    <property type="project" value="UniProtKB-UniRule"/>
</dbReference>
<dbReference type="GO" id="GO:0008270">
    <property type="term" value="F:zinc ion binding"/>
    <property type="evidence" value="ECO:0007669"/>
    <property type="project" value="UniProtKB-UniRule"/>
</dbReference>
<dbReference type="GO" id="GO:0006730">
    <property type="term" value="P:one-carbon metabolic process"/>
    <property type="evidence" value="ECO:0007669"/>
    <property type="project" value="UniProtKB-UniRule"/>
</dbReference>
<dbReference type="GO" id="GO:0006729">
    <property type="term" value="P:tetrahydrobiopterin biosynthetic process"/>
    <property type="evidence" value="ECO:0007669"/>
    <property type="project" value="TreeGrafter"/>
</dbReference>
<dbReference type="GO" id="GO:0046654">
    <property type="term" value="P:tetrahydrofolate biosynthetic process"/>
    <property type="evidence" value="ECO:0007669"/>
    <property type="project" value="UniProtKB-UniRule"/>
</dbReference>
<dbReference type="CDD" id="cd00642">
    <property type="entry name" value="GTP_cyclohydro1"/>
    <property type="match status" value="1"/>
</dbReference>
<dbReference type="FunFam" id="1.10.286.10:FF:000001">
    <property type="entry name" value="GTP cyclohydrolase 1"/>
    <property type="match status" value="1"/>
</dbReference>
<dbReference type="FunFam" id="3.30.1130.10:FF:000001">
    <property type="entry name" value="GTP cyclohydrolase 1"/>
    <property type="match status" value="1"/>
</dbReference>
<dbReference type="Gene3D" id="1.10.286.10">
    <property type="match status" value="1"/>
</dbReference>
<dbReference type="Gene3D" id="3.30.1130.10">
    <property type="match status" value="1"/>
</dbReference>
<dbReference type="HAMAP" id="MF_00223">
    <property type="entry name" value="FolE"/>
    <property type="match status" value="1"/>
</dbReference>
<dbReference type="InterPro" id="IPR043133">
    <property type="entry name" value="GTP-CH-I_C/QueF"/>
</dbReference>
<dbReference type="InterPro" id="IPR043134">
    <property type="entry name" value="GTP-CH-I_N"/>
</dbReference>
<dbReference type="InterPro" id="IPR001474">
    <property type="entry name" value="GTP_CycHdrlase_I"/>
</dbReference>
<dbReference type="InterPro" id="IPR018234">
    <property type="entry name" value="GTP_CycHdrlase_I_CS"/>
</dbReference>
<dbReference type="InterPro" id="IPR020602">
    <property type="entry name" value="GTP_CycHdrlase_I_dom"/>
</dbReference>
<dbReference type="NCBIfam" id="TIGR00063">
    <property type="entry name" value="folE"/>
    <property type="match status" value="1"/>
</dbReference>
<dbReference type="NCBIfam" id="NF006825">
    <property type="entry name" value="PRK09347.1-2"/>
    <property type="match status" value="1"/>
</dbReference>
<dbReference type="NCBIfam" id="NF006826">
    <property type="entry name" value="PRK09347.1-3"/>
    <property type="match status" value="1"/>
</dbReference>
<dbReference type="PANTHER" id="PTHR11109:SF7">
    <property type="entry name" value="GTP CYCLOHYDROLASE 1"/>
    <property type="match status" value="1"/>
</dbReference>
<dbReference type="PANTHER" id="PTHR11109">
    <property type="entry name" value="GTP CYCLOHYDROLASE I"/>
    <property type="match status" value="1"/>
</dbReference>
<dbReference type="Pfam" id="PF01227">
    <property type="entry name" value="GTP_cyclohydroI"/>
    <property type="match status" value="1"/>
</dbReference>
<dbReference type="SUPFAM" id="SSF55620">
    <property type="entry name" value="Tetrahydrobiopterin biosynthesis enzymes-like"/>
    <property type="match status" value="1"/>
</dbReference>
<dbReference type="PROSITE" id="PS00859">
    <property type="entry name" value="GTP_CYCLOHYDROL_1_1"/>
    <property type="match status" value="1"/>
</dbReference>
<dbReference type="PROSITE" id="PS00860">
    <property type="entry name" value="GTP_CYCLOHYDROL_1_2"/>
    <property type="match status" value="1"/>
</dbReference>
<comment type="catalytic activity">
    <reaction evidence="1">
        <text>GTP + H2O = 7,8-dihydroneopterin 3'-triphosphate + formate + H(+)</text>
        <dbReference type="Rhea" id="RHEA:17473"/>
        <dbReference type="ChEBI" id="CHEBI:15377"/>
        <dbReference type="ChEBI" id="CHEBI:15378"/>
        <dbReference type="ChEBI" id="CHEBI:15740"/>
        <dbReference type="ChEBI" id="CHEBI:37565"/>
        <dbReference type="ChEBI" id="CHEBI:58462"/>
        <dbReference type="EC" id="3.5.4.16"/>
    </reaction>
</comment>
<comment type="pathway">
    <text evidence="1">Cofactor biosynthesis; 7,8-dihydroneopterin triphosphate biosynthesis; 7,8-dihydroneopterin triphosphate from GTP: step 1/1.</text>
</comment>
<comment type="subunit">
    <text evidence="1">Homomer.</text>
</comment>
<comment type="similarity">
    <text evidence="1">Belongs to the GTP cyclohydrolase I family.</text>
</comment>
<protein>
    <recommendedName>
        <fullName evidence="1">GTP cyclohydrolase 1</fullName>
        <ecNumber evidence="1">3.5.4.16</ecNumber>
    </recommendedName>
    <alternativeName>
        <fullName evidence="1">GTP cyclohydrolase I</fullName>
        <shortName evidence="1">GTP-CH-I</shortName>
    </alternativeName>
</protein>